<proteinExistence type="inferred from homology"/>
<evidence type="ECO:0000250" key="1"/>
<evidence type="ECO:0000305" key="2"/>
<feature type="chain" id="PRO_0000132583" description="Small ribosomal subunit protein uS4c">
    <location>
        <begin position="1"/>
        <end position="207"/>
    </location>
</feature>
<feature type="domain" description="S4 RNA-binding">
    <location>
        <begin position="92"/>
        <end position="150"/>
    </location>
</feature>
<accession>Q6H9K2</accession>
<reference key="1">
    <citation type="journal article" date="2004" name="Syst. Bot.">
        <title>Phylogeny of horsetails (Equisetum) based on the chloroplast rps4 gene and adjacent noncoding sequences.</title>
        <authorList>
            <person name="Guillon J.-M."/>
        </authorList>
        <dbReference type="AGRICOLA" id="IND43653535"/>
    </citation>
    <scope>NUCLEOTIDE SEQUENCE [GENOMIC DNA]</scope>
</reference>
<dbReference type="EMBL" id="AJ583691">
    <property type="protein sequence ID" value="CAE47545.1"/>
    <property type="molecule type" value="Genomic_DNA"/>
</dbReference>
<dbReference type="SMR" id="Q6H9K2"/>
<dbReference type="GO" id="GO:0009507">
    <property type="term" value="C:chloroplast"/>
    <property type="evidence" value="ECO:0007669"/>
    <property type="project" value="UniProtKB-SubCell"/>
</dbReference>
<dbReference type="GO" id="GO:0015935">
    <property type="term" value="C:small ribosomal subunit"/>
    <property type="evidence" value="ECO:0007669"/>
    <property type="project" value="InterPro"/>
</dbReference>
<dbReference type="GO" id="GO:0019843">
    <property type="term" value="F:rRNA binding"/>
    <property type="evidence" value="ECO:0007669"/>
    <property type="project" value="UniProtKB-UniRule"/>
</dbReference>
<dbReference type="GO" id="GO:0003735">
    <property type="term" value="F:structural constituent of ribosome"/>
    <property type="evidence" value="ECO:0007669"/>
    <property type="project" value="InterPro"/>
</dbReference>
<dbReference type="GO" id="GO:0042274">
    <property type="term" value="P:ribosomal small subunit biogenesis"/>
    <property type="evidence" value="ECO:0007669"/>
    <property type="project" value="TreeGrafter"/>
</dbReference>
<dbReference type="GO" id="GO:0006412">
    <property type="term" value="P:translation"/>
    <property type="evidence" value="ECO:0007669"/>
    <property type="project" value="UniProtKB-UniRule"/>
</dbReference>
<dbReference type="CDD" id="cd00165">
    <property type="entry name" value="S4"/>
    <property type="match status" value="1"/>
</dbReference>
<dbReference type="FunFam" id="3.10.290.10:FF:000001">
    <property type="entry name" value="30S ribosomal protein S4"/>
    <property type="match status" value="1"/>
</dbReference>
<dbReference type="FunFam" id="1.10.1050.10:FF:000002">
    <property type="entry name" value="30S ribosomal protein S4, chloroplastic"/>
    <property type="match status" value="1"/>
</dbReference>
<dbReference type="Gene3D" id="1.10.1050.10">
    <property type="entry name" value="Ribosomal Protein S4 Delta 41, Chain A, domain 1"/>
    <property type="match status" value="1"/>
</dbReference>
<dbReference type="Gene3D" id="3.10.290.10">
    <property type="entry name" value="RNA-binding S4 domain"/>
    <property type="match status" value="1"/>
</dbReference>
<dbReference type="HAMAP" id="MF_01306_B">
    <property type="entry name" value="Ribosomal_uS4_B"/>
    <property type="match status" value="1"/>
</dbReference>
<dbReference type="InterPro" id="IPR022801">
    <property type="entry name" value="Ribosomal_uS4"/>
</dbReference>
<dbReference type="InterPro" id="IPR005709">
    <property type="entry name" value="Ribosomal_uS4_bac-type"/>
</dbReference>
<dbReference type="InterPro" id="IPR018079">
    <property type="entry name" value="Ribosomal_uS4_CS"/>
</dbReference>
<dbReference type="InterPro" id="IPR001912">
    <property type="entry name" value="Ribosomal_uS4_N"/>
</dbReference>
<dbReference type="InterPro" id="IPR002942">
    <property type="entry name" value="S4_RNA-bd"/>
</dbReference>
<dbReference type="InterPro" id="IPR036986">
    <property type="entry name" value="S4_RNA-bd_sf"/>
</dbReference>
<dbReference type="NCBIfam" id="NF003717">
    <property type="entry name" value="PRK05327.1"/>
    <property type="match status" value="1"/>
</dbReference>
<dbReference type="NCBIfam" id="TIGR01017">
    <property type="entry name" value="rpsD_bact"/>
    <property type="match status" value="1"/>
</dbReference>
<dbReference type="PANTHER" id="PTHR11831">
    <property type="entry name" value="30S 40S RIBOSOMAL PROTEIN"/>
    <property type="match status" value="1"/>
</dbReference>
<dbReference type="PANTHER" id="PTHR11831:SF4">
    <property type="entry name" value="SMALL RIBOSOMAL SUBUNIT PROTEIN US4M"/>
    <property type="match status" value="1"/>
</dbReference>
<dbReference type="Pfam" id="PF00163">
    <property type="entry name" value="Ribosomal_S4"/>
    <property type="match status" value="1"/>
</dbReference>
<dbReference type="Pfam" id="PF01479">
    <property type="entry name" value="S4"/>
    <property type="match status" value="1"/>
</dbReference>
<dbReference type="SMART" id="SM01390">
    <property type="entry name" value="Ribosomal_S4"/>
    <property type="match status" value="1"/>
</dbReference>
<dbReference type="SMART" id="SM00363">
    <property type="entry name" value="S4"/>
    <property type="match status" value="1"/>
</dbReference>
<dbReference type="SUPFAM" id="SSF55174">
    <property type="entry name" value="Alpha-L RNA-binding motif"/>
    <property type="match status" value="1"/>
</dbReference>
<dbReference type="PROSITE" id="PS00632">
    <property type="entry name" value="RIBOSOMAL_S4"/>
    <property type="match status" value="1"/>
</dbReference>
<dbReference type="PROSITE" id="PS50889">
    <property type="entry name" value="S4"/>
    <property type="match status" value="1"/>
</dbReference>
<keyword id="KW-0150">Chloroplast</keyword>
<keyword id="KW-0934">Plastid</keyword>
<keyword id="KW-0687">Ribonucleoprotein</keyword>
<keyword id="KW-0689">Ribosomal protein</keyword>
<keyword id="KW-0694">RNA-binding</keyword>
<keyword id="KW-0699">rRNA-binding</keyword>
<name>RR4_EQUVA</name>
<gene>
    <name type="primary">rps4</name>
</gene>
<protein>
    <recommendedName>
        <fullName evidence="2">Small ribosomal subunit protein uS4c</fullName>
    </recommendedName>
    <alternativeName>
        <fullName>30S ribosomal protein S4, chloroplastic</fullName>
    </alternativeName>
</protein>
<organism>
    <name type="scientific">Equisetum variegatum</name>
    <name type="common">Variegated horsetail</name>
    <dbReference type="NCBI Taxonomy" id="231678"/>
    <lineage>
        <taxon>Eukaryota</taxon>
        <taxon>Viridiplantae</taxon>
        <taxon>Streptophyta</taxon>
        <taxon>Embryophyta</taxon>
        <taxon>Tracheophyta</taxon>
        <taxon>Polypodiopsida</taxon>
        <taxon>Equisetidae</taxon>
        <taxon>Equisetales</taxon>
        <taxon>Equisetaceae</taxon>
        <taxon>Equisetum</taxon>
    </lineage>
</organism>
<comment type="function">
    <text evidence="1">One of the primary rRNA binding proteins, it binds directly to 16S rRNA where it nucleates assembly of the body of the 30S subunit.</text>
</comment>
<comment type="function">
    <text evidence="1">With S5 and S12 plays an important role in translational accuracy.</text>
</comment>
<comment type="subunit">
    <text evidence="1">Part of the 30S ribosomal subunit. Contacts protein S5. The interaction surface between S4 and S5 is involved in control of translational fidelity (By similarity).</text>
</comment>
<comment type="subcellular location">
    <subcellularLocation>
        <location>Plastid</location>
        <location>Chloroplast</location>
    </subcellularLocation>
</comment>
<comment type="similarity">
    <text evidence="2">Belongs to the universal ribosomal protein uS4 family.</text>
</comment>
<geneLocation type="chloroplast"/>
<sequence length="207" mass="23922">MSRYRGPRLRIIRRLQNLPGLTNKLVESKKNKVSGSDQSIQKKVSQYGIRLEAKQRLRFNYGLTERQLLNYVRIARCAKGSTGQILLQLLEMRLDNILFRLGFVPTIPSARQLINHRHILVNNRIVDVPSFHCKPKDIITIGSPKTYQSILTKRIESFAKDQVPEHLTLSLSEPKKPKGFVNYLINRESIGLKINELLVVEYYSRKA</sequence>